<comment type="function">
    <text evidence="1">An essential GTPase which binds GTP, GDP and possibly (p)ppGpp with moderate affinity, with high nucleotide exchange rates and a fairly low GTP hydrolysis rate. Plays a role in control of the cell cycle, stress response, ribosome biogenesis and in those bacteria that undergo differentiation, in morphogenesis control.</text>
</comment>
<comment type="cofactor">
    <cofactor evidence="1">
        <name>Mg(2+)</name>
        <dbReference type="ChEBI" id="CHEBI:18420"/>
    </cofactor>
</comment>
<comment type="subunit">
    <text evidence="1">Monomer.</text>
</comment>
<comment type="subcellular location">
    <subcellularLocation>
        <location evidence="1">Cytoplasm</location>
    </subcellularLocation>
</comment>
<comment type="similarity">
    <text evidence="1">Belongs to the TRAFAC class OBG-HflX-like GTPase superfamily. OBG GTPase family.</text>
</comment>
<feature type="chain" id="PRO_0000386061" description="GTPase Obg">
    <location>
        <begin position="1"/>
        <end position="485"/>
    </location>
</feature>
<feature type="domain" description="Obg" evidence="3">
    <location>
        <begin position="2"/>
        <end position="159"/>
    </location>
</feature>
<feature type="domain" description="OBG-type G" evidence="1">
    <location>
        <begin position="160"/>
        <end position="341"/>
    </location>
</feature>
<feature type="domain" description="OCT" evidence="2">
    <location>
        <begin position="359"/>
        <end position="437"/>
    </location>
</feature>
<feature type="region of interest" description="Disordered" evidence="4">
    <location>
        <begin position="439"/>
        <end position="485"/>
    </location>
</feature>
<feature type="compositionally biased region" description="Basic and acidic residues" evidence="4">
    <location>
        <begin position="452"/>
        <end position="468"/>
    </location>
</feature>
<feature type="binding site" evidence="1">
    <location>
        <begin position="166"/>
        <end position="173"/>
    </location>
    <ligand>
        <name>GTP</name>
        <dbReference type="ChEBI" id="CHEBI:37565"/>
    </ligand>
</feature>
<feature type="binding site" evidence="1">
    <location>
        <position position="173"/>
    </location>
    <ligand>
        <name>Mg(2+)</name>
        <dbReference type="ChEBI" id="CHEBI:18420"/>
    </ligand>
</feature>
<feature type="binding site" evidence="1">
    <location>
        <begin position="191"/>
        <end position="195"/>
    </location>
    <ligand>
        <name>GTP</name>
        <dbReference type="ChEBI" id="CHEBI:37565"/>
    </ligand>
</feature>
<feature type="binding site" evidence="1">
    <location>
        <position position="193"/>
    </location>
    <ligand>
        <name>Mg(2+)</name>
        <dbReference type="ChEBI" id="CHEBI:18420"/>
    </ligand>
</feature>
<feature type="binding site" evidence="1">
    <location>
        <begin position="212"/>
        <end position="215"/>
    </location>
    <ligand>
        <name>GTP</name>
        <dbReference type="ChEBI" id="CHEBI:37565"/>
    </ligand>
</feature>
<feature type="binding site" evidence="1">
    <location>
        <begin position="292"/>
        <end position="295"/>
    </location>
    <ligand>
        <name>GTP</name>
        <dbReference type="ChEBI" id="CHEBI:37565"/>
    </ligand>
</feature>
<feature type="binding site" evidence="1">
    <location>
        <begin position="322"/>
        <end position="324"/>
    </location>
    <ligand>
        <name>GTP</name>
        <dbReference type="ChEBI" id="CHEBI:37565"/>
    </ligand>
</feature>
<name>OBG_MYCSS</name>
<protein>
    <recommendedName>
        <fullName evidence="1">GTPase Obg</fullName>
        <ecNumber evidence="1">3.6.5.-</ecNumber>
    </recommendedName>
    <alternativeName>
        <fullName evidence="1">GTP-binding protein Obg</fullName>
    </alternativeName>
</protein>
<accession>Q1B629</accession>
<sequence>MPRFVDRVVIHARAGNGGNGCASVHREKFKPLGGPDGGNGGRGGSIVLVVDPQVHTLLDFHFHPHVVAPSGKQGAGSNRDGAAGADLEVRVPDGTVVLDEEGRVLADLVGAGTRFEAAAGGRGGLGNAALASRSRRAPGFALLGEKGQVRELTLELKTVADVGLIGFPSAGKSSLVSTISAAKPKIADYPFTTLVPNLGVVSAGDHTFTVADVPGLIPGASEGRGLGLEFLRHIERCAVLVHVVDCATMEPGRDPISDIEALEAELAAYRPTLQGDSTLGDLAERPRAVVLNKIDVPDARELADFVRDEVAERFGWPVFEVSTVAREGLRPFIFALWDMVRTYREAQPPVVPRRPIIRPIAVDETGFSVHPDGQGGFVVRGTRPERWINQTDFDNDEAVGYLGDRLARLGVEEELLRLGARPGCAVTIGDMTFDWEPQTPAGVDVQMSGRGTDTRLEQTDRVSAAERKIARRERRQSTDEPGGEE</sequence>
<organism>
    <name type="scientific">Mycobacterium sp. (strain MCS)</name>
    <dbReference type="NCBI Taxonomy" id="164756"/>
    <lineage>
        <taxon>Bacteria</taxon>
        <taxon>Bacillati</taxon>
        <taxon>Actinomycetota</taxon>
        <taxon>Actinomycetes</taxon>
        <taxon>Mycobacteriales</taxon>
        <taxon>Mycobacteriaceae</taxon>
        <taxon>Mycobacterium</taxon>
    </lineage>
</organism>
<dbReference type="EC" id="3.6.5.-" evidence="1"/>
<dbReference type="EMBL" id="CP000384">
    <property type="protein sequence ID" value="ABG09655.1"/>
    <property type="molecule type" value="Genomic_DNA"/>
</dbReference>
<dbReference type="SMR" id="Q1B629"/>
<dbReference type="KEGG" id="mmc:Mmcs_3548"/>
<dbReference type="HOGENOM" id="CLU_011747_2_1_11"/>
<dbReference type="BioCyc" id="MSP164756:G1G6O-3619-MONOMER"/>
<dbReference type="GO" id="GO:0005737">
    <property type="term" value="C:cytoplasm"/>
    <property type="evidence" value="ECO:0007669"/>
    <property type="project" value="UniProtKB-SubCell"/>
</dbReference>
<dbReference type="GO" id="GO:0005525">
    <property type="term" value="F:GTP binding"/>
    <property type="evidence" value="ECO:0007669"/>
    <property type="project" value="UniProtKB-UniRule"/>
</dbReference>
<dbReference type="GO" id="GO:0003924">
    <property type="term" value="F:GTPase activity"/>
    <property type="evidence" value="ECO:0007669"/>
    <property type="project" value="UniProtKB-UniRule"/>
</dbReference>
<dbReference type="GO" id="GO:0000287">
    <property type="term" value="F:magnesium ion binding"/>
    <property type="evidence" value="ECO:0007669"/>
    <property type="project" value="InterPro"/>
</dbReference>
<dbReference type="GO" id="GO:0042254">
    <property type="term" value="P:ribosome biogenesis"/>
    <property type="evidence" value="ECO:0007669"/>
    <property type="project" value="UniProtKB-UniRule"/>
</dbReference>
<dbReference type="CDD" id="cd01898">
    <property type="entry name" value="Obg"/>
    <property type="match status" value="1"/>
</dbReference>
<dbReference type="FunFam" id="2.70.210.12:FF:000001">
    <property type="entry name" value="GTPase Obg"/>
    <property type="match status" value="1"/>
</dbReference>
<dbReference type="Gene3D" id="3.30.300.350">
    <property type="entry name" value="GTP-binding protein OBG, C-terminal domain"/>
    <property type="match status" value="1"/>
</dbReference>
<dbReference type="Gene3D" id="2.70.210.12">
    <property type="entry name" value="GTP1/OBG domain"/>
    <property type="match status" value="1"/>
</dbReference>
<dbReference type="Gene3D" id="3.40.50.300">
    <property type="entry name" value="P-loop containing nucleotide triphosphate hydrolases"/>
    <property type="match status" value="1"/>
</dbReference>
<dbReference type="HAMAP" id="MF_01454">
    <property type="entry name" value="GTPase_Obg"/>
    <property type="match status" value="1"/>
</dbReference>
<dbReference type="InterPro" id="IPR031167">
    <property type="entry name" value="G_OBG"/>
</dbReference>
<dbReference type="InterPro" id="IPR006073">
    <property type="entry name" value="GTP-bd"/>
</dbReference>
<dbReference type="InterPro" id="IPR014100">
    <property type="entry name" value="GTP-bd_Obg/CgtA"/>
</dbReference>
<dbReference type="InterPro" id="IPR036346">
    <property type="entry name" value="GTP-bd_prot_GTP1/OBG_C_sf"/>
</dbReference>
<dbReference type="InterPro" id="IPR006074">
    <property type="entry name" value="GTP1-OBG_CS"/>
</dbReference>
<dbReference type="InterPro" id="IPR006169">
    <property type="entry name" value="GTP1_OBG_dom"/>
</dbReference>
<dbReference type="InterPro" id="IPR036726">
    <property type="entry name" value="GTP1_OBG_dom_sf"/>
</dbReference>
<dbReference type="InterPro" id="IPR045086">
    <property type="entry name" value="OBG_GTPase"/>
</dbReference>
<dbReference type="InterPro" id="IPR015349">
    <property type="entry name" value="OCT_dom"/>
</dbReference>
<dbReference type="InterPro" id="IPR027417">
    <property type="entry name" value="P-loop_NTPase"/>
</dbReference>
<dbReference type="NCBIfam" id="TIGR02729">
    <property type="entry name" value="Obg_CgtA"/>
    <property type="match status" value="1"/>
</dbReference>
<dbReference type="NCBIfam" id="TIGR03595">
    <property type="entry name" value="Obg_CgtA_exten"/>
    <property type="match status" value="1"/>
</dbReference>
<dbReference type="NCBIfam" id="NF008954">
    <property type="entry name" value="PRK12296.1"/>
    <property type="match status" value="1"/>
</dbReference>
<dbReference type="NCBIfam" id="NF008955">
    <property type="entry name" value="PRK12297.1"/>
    <property type="match status" value="1"/>
</dbReference>
<dbReference type="NCBIfam" id="NF008956">
    <property type="entry name" value="PRK12299.1"/>
    <property type="match status" value="1"/>
</dbReference>
<dbReference type="PANTHER" id="PTHR11702">
    <property type="entry name" value="DEVELOPMENTALLY REGULATED GTP-BINDING PROTEIN-RELATED"/>
    <property type="match status" value="1"/>
</dbReference>
<dbReference type="PANTHER" id="PTHR11702:SF31">
    <property type="entry name" value="MITOCHONDRIAL RIBOSOME-ASSOCIATED GTPASE 2"/>
    <property type="match status" value="1"/>
</dbReference>
<dbReference type="Pfam" id="PF09269">
    <property type="entry name" value="DUF1967"/>
    <property type="match status" value="1"/>
</dbReference>
<dbReference type="Pfam" id="PF01018">
    <property type="entry name" value="GTP1_OBG"/>
    <property type="match status" value="1"/>
</dbReference>
<dbReference type="Pfam" id="PF01926">
    <property type="entry name" value="MMR_HSR1"/>
    <property type="match status" value="1"/>
</dbReference>
<dbReference type="PRINTS" id="PR00326">
    <property type="entry name" value="GTP1OBG"/>
</dbReference>
<dbReference type="SUPFAM" id="SSF102741">
    <property type="entry name" value="Obg GTP-binding protein C-terminal domain"/>
    <property type="match status" value="1"/>
</dbReference>
<dbReference type="SUPFAM" id="SSF82051">
    <property type="entry name" value="Obg GTP-binding protein N-terminal domain"/>
    <property type="match status" value="1"/>
</dbReference>
<dbReference type="SUPFAM" id="SSF52540">
    <property type="entry name" value="P-loop containing nucleoside triphosphate hydrolases"/>
    <property type="match status" value="1"/>
</dbReference>
<dbReference type="PROSITE" id="PS51710">
    <property type="entry name" value="G_OBG"/>
    <property type="match status" value="1"/>
</dbReference>
<dbReference type="PROSITE" id="PS00905">
    <property type="entry name" value="GTP1_OBG"/>
    <property type="match status" value="1"/>
</dbReference>
<dbReference type="PROSITE" id="PS51883">
    <property type="entry name" value="OBG"/>
    <property type="match status" value="1"/>
</dbReference>
<dbReference type="PROSITE" id="PS51881">
    <property type="entry name" value="OCT"/>
    <property type="match status" value="1"/>
</dbReference>
<proteinExistence type="inferred from homology"/>
<evidence type="ECO:0000255" key="1">
    <source>
        <dbReference type="HAMAP-Rule" id="MF_01454"/>
    </source>
</evidence>
<evidence type="ECO:0000255" key="2">
    <source>
        <dbReference type="PROSITE-ProRule" id="PRU01229"/>
    </source>
</evidence>
<evidence type="ECO:0000255" key="3">
    <source>
        <dbReference type="PROSITE-ProRule" id="PRU01231"/>
    </source>
</evidence>
<evidence type="ECO:0000256" key="4">
    <source>
        <dbReference type="SAM" id="MobiDB-lite"/>
    </source>
</evidence>
<gene>
    <name evidence="1" type="primary">obg</name>
    <name type="ordered locus">Mmcs_3548</name>
</gene>
<keyword id="KW-0963">Cytoplasm</keyword>
<keyword id="KW-0342">GTP-binding</keyword>
<keyword id="KW-0378">Hydrolase</keyword>
<keyword id="KW-0460">Magnesium</keyword>
<keyword id="KW-0479">Metal-binding</keyword>
<keyword id="KW-0547">Nucleotide-binding</keyword>
<reference key="1">
    <citation type="submission" date="2006-06" db="EMBL/GenBank/DDBJ databases">
        <title>Complete sequence of chromosome of Mycobacterium sp. MCS.</title>
        <authorList>
            <consortium name="US DOE Joint Genome Institute"/>
            <person name="Copeland A."/>
            <person name="Lucas S."/>
            <person name="Lapidus A."/>
            <person name="Barry K."/>
            <person name="Detter J.C."/>
            <person name="Glavina del Rio T."/>
            <person name="Hammon N."/>
            <person name="Israni S."/>
            <person name="Dalin E."/>
            <person name="Tice H."/>
            <person name="Pitluck S."/>
            <person name="Martinez M."/>
            <person name="Schmutz J."/>
            <person name="Larimer F."/>
            <person name="Land M."/>
            <person name="Hauser L."/>
            <person name="Kyrpides N."/>
            <person name="Kim E."/>
            <person name="Miller C.D."/>
            <person name="Hughes J.E."/>
            <person name="Anderson A.J."/>
            <person name="Sims R.C."/>
            <person name="Richardson P."/>
        </authorList>
    </citation>
    <scope>NUCLEOTIDE SEQUENCE [LARGE SCALE GENOMIC DNA]</scope>
    <source>
        <strain>MCS</strain>
    </source>
</reference>